<organism>
    <name type="scientific">Parabacteroides distasonis (strain ATCC 8503 / DSM 20701 / CIP 104284 / JCM 5825 / NCTC 11152)</name>
    <dbReference type="NCBI Taxonomy" id="435591"/>
    <lineage>
        <taxon>Bacteria</taxon>
        <taxon>Pseudomonadati</taxon>
        <taxon>Bacteroidota</taxon>
        <taxon>Bacteroidia</taxon>
        <taxon>Bacteroidales</taxon>
        <taxon>Tannerellaceae</taxon>
        <taxon>Parabacteroides</taxon>
    </lineage>
</organism>
<protein>
    <recommendedName>
        <fullName evidence="1">tRNA-specific 2-thiouridylase MnmA</fullName>
        <ecNumber evidence="1">2.8.1.13</ecNumber>
    </recommendedName>
</protein>
<keyword id="KW-0067">ATP-binding</keyword>
<keyword id="KW-0963">Cytoplasm</keyword>
<keyword id="KW-1015">Disulfide bond</keyword>
<keyword id="KW-0547">Nucleotide-binding</keyword>
<keyword id="KW-1185">Reference proteome</keyword>
<keyword id="KW-0694">RNA-binding</keyword>
<keyword id="KW-0808">Transferase</keyword>
<keyword id="KW-0819">tRNA processing</keyword>
<keyword id="KW-0820">tRNA-binding</keyword>
<feature type="chain" id="PRO_0000349727" description="tRNA-specific 2-thiouridylase MnmA">
    <location>
        <begin position="1"/>
        <end position="358"/>
    </location>
</feature>
<feature type="region of interest" description="Interaction with target base in tRNA" evidence="1">
    <location>
        <begin position="93"/>
        <end position="95"/>
    </location>
</feature>
<feature type="region of interest" description="Interaction with tRNA" evidence="1">
    <location>
        <begin position="143"/>
        <end position="145"/>
    </location>
</feature>
<feature type="active site" description="Nucleophile" evidence="1">
    <location>
        <position position="98"/>
    </location>
</feature>
<feature type="active site" description="Cysteine persulfide intermediate" evidence="1">
    <location>
        <position position="193"/>
    </location>
</feature>
<feature type="binding site" evidence="1">
    <location>
        <begin position="6"/>
        <end position="13"/>
    </location>
    <ligand>
        <name>ATP</name>
        <dbReference type="ChEBI" id="CHEBI:30616"/>
    </ligand>
</feature>
<feature type="binding site" evidence="1">
    <location>
        <position position="32"/>
    </location>
    <ligand>
        <name>ATP</name>
        <dbReference type="ChEBI" id="CHEBI:30616"/>
    </ligand>
</feature>
<feature type="binding site" evidence="1">
    <location>
        <position position="121"/>
    </location>
    <ligand>
        <name>ATP</name>
        <dbReference type="ChEBI" id="CHEBI:30616"/>
    </ligand>
</feature>
<feature type="site" description="Interaction with tRNA" evidence="1">
    <location>
        <position position="122"/>
    </location>
</feature>
<feature type="site" description="Interaction with tRNA" evidence="1">
    <location>
        <position position="335"/>
    </location>
</feature>
<feature type="disulfide bond" description="Alternate" evidence="1">
    <location>
        <begin position="98"/>
        <end position="193"/>
    </location>
</feature>
<reference key="1">
    <citation type="journal article" date="2007" name="PLoS Biol.">
        <title>Evolution of symbiotic bacteria in the distal human intestine.</title>
        <authorList>
            <person name="Xu J."/>
            <person name="Mahowald M.A."/>
            <person name="Ley R.E."/>
            <person name="Lozupone C.A."/>
            <person name="Hamady M."/>
            <person name="Martens E.C."/>
            <person name="Henrissat B."/>
            <person name="Coutinho P.M."/>
            <person name="Minx P."/>
            <person name="Latreille P."/>
            <person name="Cordum H."/>
            <person name="Van Brunt A."/>
            <person name="Kim K."/>
            <person name="Fulton R.S."/>
            <person name="Fulton L.A."/>
            <person name="Clifton S.W."/>
            <person name="Wilson R.K."/>
            <person name="Knight R.D."/>
            <person name="Gordon J.I."/>
        </authorList>
    </citation>
    <scope>NUCLEOTIDE SEQUENCE [LARGE SCALE GENOMIC DNA]</scope>
    <source>
        <strain>ATCC 8503 / DSM 20701 / CIP 104284 / JCM 5825 / NCTC 11152</strain>
    </source>
</reference>
<name>MNMA_PARD8</name>
<dbReference type="EC" id="2.8.1.13" evidence="1"/>
<dbReference type="EMBL" id="CP000140">
    <property type="protein sequence ID" value="ABR45465.1"/>
    <property type="molecule type" value="Genomic_DNA"/>
</dbReference>
<dbReference type="RefSeq" id="WP_005858803.1">
    <property type="nucleotide sequence ID" value="NC_009615.1"/>
</dbReference>
<dbReference type="SMR" id="A6LIF1"/>
<dbReference type="STRING" id="435591.BDI_3778"/>
<dbReference type="PaxDb" id="435591-BDI_3778"/>
<dbReference type="KEGG" id="pdi:BDI_3778"/>
<dbReference type="eggNOG" id="COG0482">
    <property type="taxonomic scope" value="Bacteria"/>
</dbReference>
<dbReference type="HOGENOM" id="CLU_035188_1_0_10"/>
<dbReference type="BioCyc" id="PDIS435591:G1G5A-3875-MONOMER"/>
<dbReference type="Proteomes" id="UP000000566">
    <property type="component" value="Chromosome"/>
</dbReference>
<dbReference type="GO" id="GO:0005737">
    <property type="term" value="C:cytoplasm"/>
    <property type="evidence" value="ECO:0007669"/>
    <property type="project" value="UniProtKB-SubCell"/>
</dbReference>
<dbReference type="GO" id="GO:0005524">
    <property type="term" value="F:ATP binding"/>
    <property type="evidence" value="ECO:0007669"/>
    <property type="project" value="UniProtKB-KW"/>
</dbReference>
<dbReference type="GO" id="GO:0000049">
    <property type="term" value="F:tRNA binding"/>
    <property type="evidence" value="ECO:0007669"/>
    <property type="project" value="UniProtKB-KW"/>
</dbReference>
<dbReference type="GO" id="GO:0103016">
    <property type="term" value="F:tRNA-uridine 2-sulfurtransferase activity"/>
    <property type="evidence" value="ECO:0007669"/>
    <property type="project" value="UniProtKB-EC"/>
</dbReference>
<dbReference type="GO" id="GO:0006400">
    <property type="term" value="P:tRNA modification"/>
    <property type="evidence" value="ECO:0007669"/>
    <property type="project" value="UniProtKB-UniRule"/>
</dbReference>
<dbReference type="CDD" id="cd01998">
    <property type="entry name" value="MnmA_TRMU-like"/>
    <property type="match status" value="1"/>
</dbReference>
<dbReference type="FunFam" id="2.30.30.280:FF:000001">
    <property type="entry name" value="tRNA-specific 2-thiouridylase MnmA"/>
    <property type="match status" value="1"/>
</dbReference>
<dbReference type="Gene3D" id="2.30.30.280">
    <property type="entry name" value="Adenine nucleotide alpha hydrolases-like domains"/>
    <property type="match status" value="1"/>
</dbReference>
<dbReference type="Gene3D" id="3.40.50.620">
    <property type="entry name" value="HUPs"/>
    <property type="match status" value="1"/>
</dbReference>
<dbReference type="Gene3D" id="2.40.30.10">
    <property type="entry name" value="Translation factors"/>
    <property type="match status" value="1"/>
</dbReference>
<dbReference type="HAMAP" id="MF_00144">
    <property type="entry name" value="tRNA_thiouridyl_MnmA"/>
    <property type="match status" value="1"/>
</dbReference>
<dbReference type="InterPro" id="IPR004506">
    <property type="entry name" value="MnmA-like"/>
</dbReference>
<dbReference type="InterPro" id="IPR046885">
    <property type="entry name" value="MnmA-like_C"/>
</dbReference>
<dbReference type="InterPro" id="IPR046884">
    <property type="entry name" value="MnmA-like_central"/>
</dbReference>
<dbReference type="InterPro" id="IPR023382">
    <property type="entry name" value="MnmA-like_central_sf"/>
</dbReference>
<dbReference type="InterPro" id="IPR014729">
    <property type="entry name" value="Rossmann-like_a/b/a_fold"/>
</dbReference>
<dbReference type="InterPro" id="IPR051305">
    <property type="entry name" value="tRNA_2-thiouridylase_MnmA"/>
</dbReference>
<dbReference type="NCBIfam" id="NF001138">
    <property type="entry name" value="PRK00143.1"/>
    <property type="match status" value="1"/>
</dbReference>
<dbReference type="NCBIfam" id="TIGR00420">
    <property type="entry name" value="trmU"/>
    <property type="match status" value="1"/>
</dbReference>
<dbReference type="PANTHER" id="PTHR43052">
    <property type="match status" value="1"/>
</dbReference>
<dbReference type="PANTHER" id="PTHR43052:SF1">
    <property type="entry name" value="TRNA-5-TAURINOMETHYLURIDINE 2-SULFURTRANSFERASE"/>
    <property type="match status" value="1"/>
</dbReference>
<dbReference type="Pfam" id="PF03054">
    <property type="entry name" value="tRNA_Me_trans"/>
    <property type="match status" value="1"/>
</dbReference>
<dbReference type="Pfam" id="PF20258">
    <property type="entry name" value="tRNA_Me_trans_C"/>
    <property type="match status" value="1"/>
</dbReference>
<dbReference type="Pfam" id="PF20259">
    <property type="entry name" value="tRNA_Me_trans_M"/>
    <property type="match status" value="1"/>
</dbReference>
<dbReference type="SUPFAM" id="SSF52402">
    <property type="entry name" value="Adenine nucleotide alpha hydrolases-like"/>
    <property type="match status" value="1"/>
</dbReference>
<comment type="function">
    <text evidence="1">Catalyzes the 2-thiolation of uridine at the wobble position (U34) of tRNA, leading to the formation of s(2)U34.</text>
</comment>
<comment type="catalytic activity">
    <reaction evidence="1">
        <text>S-sulfanyl-L-cysteinyl-[protein] + uridine(34) in tRNA + AH2 + ATP = 2-thiouridine(34) in tRNA + L-cysteinyl-[protein] + A + AMP + diphosphate + H(+)</text>
        <dbReference type="Rhea" id="RHEA:47032"/>
        <dbReference type="Rhea" id="RHEA-COMP:10131"/>
        <dbReference type="Rhea" id="RHEA-COMP:11726"/>
        <dbReference type="Rhea" id="RHEA-COMP:11727"/>
        <dbReference type="Rhea" id="RHEA-COMP:11728"/>
        <dbReference type="ChEBI" id="CHEBI:13193"/>
        <dbReference type="ChEBI" id="CHEBI:15378"/>
        <dbReference type="ChEBI" id="CHEBI:17499"/>
        <dbReference type="ChEBI" id="CHEBI:29950"/>
        <dbReference type="ChEBI" id="CHEBI:30616"/>
        <dbReference type="ChEBI" id="CHEBI:33019"/>
        <dbReference type="ChEBI" id="CHEBI:61963"/>
        <dbReference type="ChEBI" id="CHEBI:65315"/>
        <dbReference type="ChEBI" id="CHEBI:87170"/>
        <dbReference type="ChEBI" id="CHEBI:456215"/>
        <dbReference type="EC" id="2.8.1.13"/>
    </reaction>
</comment>
<comment type="subcellular location">
    <subcellularLocation>
        <location evidence="1">Cytoplasm</location>
    </subcellularLocation>
</comment>
<comment type="similarity">
    <text evidence="1">Belongs to the MnmA/TRMU family.</text>
</comment>
<proteinExistence type="inferred from homology"/>
<accession>A6LIF1</accession>
<gene>
    <name evidence="1" type="primary">mnmA</name>
    <name type="ordered locus">BDI_3778</name>
</gene>
<evidence type="ECO:0000255" key="1">
    <source>
        <dbReference type="HAMAP-Rule" id="MF_00144"/>
    </source>
</evidence>
<sequence length="358" mass="40937">MEIAALVSGGVDSSVVVHQLKEAGYDPTIFYIRIGMEDKDGYIDCPAEEDIEITSYIARKYGCRFEIVSLHDEYWDRVVSYTIESVKRGLTPNPDMMCNKYIKFGCFEEKWGKDFDKIATGHYATTTEIDGKTWLSTAKDPVKDQTDFLGQITRLQIQKLMFPIGHLMKSEVRAIAEAQKLPSAKRKDSQGICFLGKINYNDFIERYLGKRPGKIVELETGKVLGKHNGYWFHTIGQRKGLGLSGGPWFVIQKDIKRNIIYVSNGYDPETQYGKVINMQGFDFITEDPWGEFEGEKEITFKIRHTPEFTHGYIRRIGDLYRVESDEKIQGIAPGQYSVIYDKDHHLCLGSGMIIDETK</sequence>